<name>CNIH2_CHICK</name>
<keyword id="KW-0472">Membrane</keyword>
<keyword id="KW-1185">Reference proteome</keyword>
<keyword id="KW-0812">Transmembrane</keyword>
<keyword id="KW-1133">Transmembrane helix</keyword>
<feature type="chain" id="PRO_0000408974" description="Protein cornichon homolog 2">
    <location>
        <begin position="1"/>
        <end position="160"/>
    </location>
</feature>
<feature type="topological domain" description="Cytoplasmic" evidence="2">
    <location>
        <begin position="1"/>
        <end position="10"/>
    </location>
</feature>
<feature type="transmembrane region" description="Helical" evidence="2">
    <location>
        <begin position="11"/>
        <end position="31"/>
    </location>
</feature>
<feature type="topological domain" description="Lumenal" evidence="2">
    <location>
        <begin position="32"/>
        <end position="72"/>
    </location>
</feature>
<feature type="transmembrane region" description="Helical" evidence="2">
    <location>
        <begin position="73"/>
        <end position="93"/>
    </location>
</feature>
<feature type="topological domain" description="Cytoplasmic" evidence="2">
    <location>
        <begin position="94"/>
        <end position="138"/>
    </location>
</feature>
<feature type="transmembrane region" description="Helical" evidence="2">
    <location>
        <begin position="139"/>
        <end position="159"/>
    </location>
</feature>
<feature type="topological domain" description="Lumenal" evidence="2">
    <location>
        <position position="160"/>
    </location>
</feature>
<comment type="function">
    <text evidence="1 3">Regulates the trafficking and gating properties of AMPA-selective glutamate receptors (AMPARs) (By similarity). Plays an important role in the proper development of cranial nerves by facilitating the secretion of HBEGF.</text>
</comment>
<comment type="subunit">
    <text evidence="3">Interacts with HBEGF.</text>
</comment>
<comment type="subcellular location">
    <subcellularLocation>
        <location evidence="4">Membrane</location>
        <topology evidence="4">Multi-pass membrane protein</topology>
    </subcellularLocation>
</comment>
<comment type="tissue specificity">
    <text evidence="3">Expressed in the odd-numbered neuromeres (r3 and r5) of the developing hindbrain.</text>
</comment>
<comment type="similarity">
    <text evidence="4">Belongs to the cornichon family.</text>
</comment>
<dbReference type="EMBL" id="AB232677">
    <property type="protein sequence ID" value="BAE20186.1"/>
    <property type="molecule type" value="mRNA"/>
</dbReference>
<dbReference type="RefSeq" id="NP_001028673.1">
    <property type="nucleotide sequence ID" value="NM_001033501.1"/>
</dbReference>
<dbReference type="SMR" id="Q401C0"/>
<dbReference type="BioGRID" id="689033">
    <property type="interactions" value="1"/>
</dbReference>
<dbReference type="FunCoup" id="Q401C0">
    <property type="interactions" value="630"/>
</dbReference>
<dbReference type="STRING" id="9031.ENSGALP00000015132"/>
<dbReference type="GeneID" id="613230"/>
<dbReference type="CTD" id="254263"/>
<dbReference type="VEuPathDB" id="HostDB:geneid_421323"/>
<dbReference type="InParanoid" id="Q401C0"/>
<dbReference type="PhylomeDB" id="Q401C0"/>
<dbReference type="PRO" id="PR:Q401C0"/>
<dbReference type="Proteomes" id="UP000000539">
    <property type="component" value="Unassembled WGS sequence"/>
</dbReference>
<dbReference type="GO" id="GO:0030425">
    <property type="term" value="C:dendrite"/>
    <property type="evidence" value="ECO:0000318"/>
    <property type="project" value="GO_Central"/>
</dbReference>
<dbReference type="GO" id="GO:0016020">
    <property type="term" value="C:membrane"/>
    <property type="evidence" value="ECO:0007669"/>
    <property type="project" value="UniProtKB-SubCell"/>
</dbReference>
<dbReference type="GO" id="GO:0045202">
    <property type="term" value="C:synapse"/>
    <property type="evidence" value="ECO:0000318"/>
    <property type="project" value="GO_Central"/>
</dbReference>
<dbReference type="GO" id="GO:0005102">
    <property type="term" value="F:signaling receptor binding"/>
    <property type="evidence" value="ECO:0000318"/>
    <property type="project" value="GO_Central"/>
</dbReference>
<dbReference type="GO" id="GO:0021545">
    <property type="term" value="P:cranial nerve development"/>
    <property type="evidence" value="ECO:0000315"/>
    <property type="project" value="UniProtKB"/>
</dbReference>
<dbReference type="GO" id="GO:0035249">
    <property type="term" value="P:synaptic transmission, glutamatergic"/>
    <property type="evidence" value="ECO:0000318"/>
    <property type="project" value="GO_Central"/>
</dbReference>
<dbReference type="GO" id="GO:0016192">
    <property type="term" value="P:vesicle-mediated transport"/>
    <property type="evidence" value="ECO:0007669"/>
    <property type="project" value="InterPro"/>
</dbReference>
<dbReference type="InterPro" id="IPR003377">
    <property type="entry name" value="Cornichon"/>
</dbReference>
<dbReference type="InterPro" id="IPR033466">
    <property type="entry name" value="Cornichon_conserved"/>
</dbReference>
<dbReference type="PANTHER" id="PTHR12290">
    <property type="entry name" value="CORNICHON-RELATED"/>
    <property type="match status" value="1"/>
</dbReference>
<dbReference type="Pfam" id="PF03311">
    <property type="entry name" value="Cornichon"/>
    <property type="match status" value="2"/>
</dbReference>
<dbReference type="SMART" id="SM01398">
    <property type="entry name" value="Cornichon"/>
    <property type="match status" value="1"/>
</dbReference>
<dbReference type="PROSITE" id="PS01340">
    <property type="entry name" value="CORNICHON"/>
    <property type="match status" value="1"/>
</dbReference>
<accession>Q401C0</accession>
<organism>
    <name type="scientific">Gallus gallus</name>
    <name type="common">Chicken</name>
    <dbReference type="NCBI Taxonomy" id="9031"/>
    <lineage>
        <taxon>Eukaryota</taxon>
        <taxon>Metazoa</taxon>
        <taxon>Chordata</taxon>
        <taxon>Craniata</taxon>
        <taxon>Vertebrata</taxon>
        <taxon>Euteleostomi</taxon>
        <taxon>Archelosauria</taxon>
        <taxon>Archosauria</taxon>
        <taxon>Dinosauria</taxon>
        <taxon>Saurischia</taxon>
        <taxon>Theropoda</taxon>
        <taxon>Coelurosauria</taxon>
        <taxon>Aves</taxon>
        <taxon>Neognathae</taxon>
        <taxon>Galloanserae</taxon>
        <taxon>Galliformes</taxon>
        <taxon>Phasianidae</taxon>
        <taxon>Phasianinae</taxon>
        <taxon>Gallus</taxon>
    </lineage>
</organism>
<reference key="1">
    <citation type="journal article" date="2007" name="Mol. Biol. Cell">
        <title>Cornichon-like protein facilitates secretion of HB-EGF and regulates proper development of cranial nerves.</title>
        <authorList>
            <person name="Hoshino H."/>
            <person name="Uchida T."/>
            <person name="Otsuki T."/>
            <person name="Kawamoto S."/>
            <person name="Okubo K."/>
            <person name="Takeichi M."/>
            <person name="Chisaka O."/>
        </authorList>
    </citation>
    <scope>NUCLEOTIDE SEQUENCE [MRNA]</scope>
    <scope>FUNCTION</scope>
    <scope>INTERACTION WITH HBEGF</scope>
    <scope>TISSUE SPECIFICITY</scope>
</reference>
<gene>
    <name type="primary">CNIH2</name>
    <name type="synonym">CNIL</name>
</gene>
<sequence>MAFTFAAFCYMLTLVLCASLIFFVIWHIIAFDELRTDFKNPIDQGNPARARERLKNIERICCLLRKLVVPEYCIHGLFCLMFLCAAEWVTLGLNLPLLLYHLWRYFHRPSDGSEGLFDAVSIMDADILGYCQKEAWCKLAFYLLSFFYYLYSMVYTLVSF</sequence>
<protein>
    <recommendedName>
        <fullName>Protein cornichon homolog 2</fullName>
        <shortName>CNIH-2</shortName>
    </recommendedName>
    <alternativeName>
        <fullName>Cornichon family AMPA receptor auxiliary protein 2</fullName>
    </alternativeName>
    <alternativeName>
        <fullName>Cornichon-like protein</fullName>
    </alternativeName>
</protein>
<evidence type="ECO:0000250" key="1"/>
<evidence type="ECO:0000255" key="2"/>
<evidence type="ECO:0000269" key="3">
    <source>
    </source>
</evidence>
<evidence type="ECO:0000305" key="4"/>
<proteinExistence type="evidence at protein level"/>